<keyword id="KW-0963">Cytoplasm</keyword>
<keyword id="KW-0249">Electron transport</keyword>
<keyword id="KW-0676">Redox-active center</keyword>
<keyword id="KW-1185">Reference proteome</keyword>
<keyword id="KW-0813">Transport</keyword>
<comment type="function">
    <text evidence="1">Has a glutathione-disulfide oxidoreductase activity in the presence of NADPH and glutathione reductase. Reduces low molecular weight disulfides and proteins (By similarity).</text>
</comment>
<comment type="subcellular location">
    <subcellularLocation>
        <location evidence="1">Cytoplasm</location>
    </subcellularLocation>
</comment>
<comment type="developmental stage">
    <text evidence="3">Expressed in late sporogonial stages.</text>
</comment>
<comment type="similarity">
    <text evidence="4">Belongs to the glutaredoxin family.</text>
</comment>
<comment type="caution">
    <text evidence="4">May be inactive since it lacks one cysteine involved the redox-active disulfide bond.</text>
</comment>
<name>GLRX_ENCCU</name>
<gene>
    <name type="ordered locus">ECU08_1380</name>
</gene>
<reference key="1">
    <citation type="journal article" date="2001" name="Nature">
        <title>Genome sequence and gene compaction of the eukaryote parasite Encephalitozoon cuniculi.</title>
        <authorList>
            <person name="Katinka M.D."/>
            <person name="Duprat S."/>
            <person name="Cornillot E."/>
            <person name="Metenier G."/>
            <person name="Thomarat F."/>
            <person name="Prensier G."/>
            <person name="Barbe V."/>
            <person name="Peyretaillade E."/>
            <person name="Brottier P."/>
            <person name="Wincker P."/>
            <person name="Delbac F."/>
            <person name="El Alaoui H."/>
            <person name="Peyret P."/>
            <person name="Saurin W."/>
            <person name="Gouy M."/>
            <person name="Weissenbach J."/>
            <person name="Vivares C.P."/>
        </authorList>
    </citation>
    <scope>NUCLEOTIDE SEQUENCE [LARGE SCALE GENOMIC DNA]</scope>
    <source>
        <strain>GB-M1</strain>
    </source>
</reference>
<reference key="2">
    <citation type="journal article" date="2009" name="BMC Genomics">
        <title>Identification of transcriptional signals in Encephalitozoon cuniculi widespread among Microsporidia phylum: support for accurate structural genome annotation.</title>
        <authorList>
            <person name="Peyretaillade E."/>
            <person name="Goncalves O."/>
            <person name="Terrat S."/>
            <person name="Dugat-Bony E."/>
            <person name="Wincker P."/>
            <person name="Cornman R.S."/>
            <person name="Evans J.D."/>
            <person name="Delbac F."/>
            <person name="Peyret P."/>
        </authorList>
    </citation>
    <scope>GENOME REANNOTATION</scope>
    <source>
        <strain>GB-M1</strain>
    </source>
</reference>
<reference key="3">
    <citation type="journal article" date="2006" name="Proteomics">
        <title>Proteomic analysis of the eukaryotic parasite Encephalitozoon cuniculi (microsporidia): a reference map for proteins expressed in late sporogonial stages.</title>
        <authorList>
            <person name="Brosson D."/>
            <person name="Kuhn L."/>
            <person name="Delbac F."/>
            <person name="Garin J."/>
            <person name="Vivares C.P."/>
            <person name="Texier C."/>
        </authorList>
    </citation>
    <scope>IDENTIFICATION BY MASS SPECTROMETRY [LARGE SCALE ANALYSIS]</scope>
    <scope>DEVELOPMENTAL STAGE</scope>
</reference>
<organism>
    <name type="scientific">Encephalitozoon cuniculi (strain GB-M1)</name>
    <name type="common">Microsporidian parasite</name>
    <dbReference type="NCBI Taxonomy" id="284813"/>
    <lineage>
        <taxon>Eukaryota</taxon>
        <taxon>Fungi</taxon>
        <taxon>Fungi incertae sedis</taxon>
        <taxon>Microsporidia</taxon>
        <taxon>Unikaryonidae</taxon>
        <taxon>Encephalitozoon</taxon>
    </lineage>
</organism>
<evidence type="ECO:0000250" key="1"/>
<evidence type="ECO:0000255" key="2">
    <source>
        <dbReference type="PROSITE-ProRule" id="PRU00686"/>
    </source>
</evidence>
<evidence type="ECO:0000269" key="3">
    <source>
    </source>
</evidence>
<evidence type="ECO:0000305" key="4"/>
<protein>
    <recommendedName>
        <fullName>Glutaredoxin-like protein ECU08_1380</fullName>
    </recommendedName>
</protein>
<proteinExistence type="evidence at protein level"/>
<feature type="chain" id="PRO_0000383029" description="Glutaredoxin-like protein ECU08_1380">
    <location>
        <begin position="1"/>
        <end position="129"/>
    </location>
</feature>
<feature type="domain" description="Glutaredoxin" evidence="2">
    <location>
        <begin position="26"/>
        <end position="126"/>
    </location>
</feature>
<dbReference type="EMBL" id="AL590448">
    <property type="protein sequence ID" value="CAD26442.2"/>
    <property type="molecule type" value="Genomic_DNA"/>
</dbReference>
<dbReference type="RefSeq" id="NP_597266.2">
    <property type="nucleotide sequence ID" value="NM_001041875.2"/>
</dbReference>
<dbReference type="SMR" id="Q8SUM8"/>
<dbReference type="STRING" id="284813.Q8SUM8"/>
<dbReference type="GeneID" id="859688"/>
<dbReference type="KEGG" id="ecu:ECU08_1380"/>
<dbReference type="VEuPathDB" id="MicrosporidiaDB:ECU08_1380"/>
<dbReference type="HOGENOM" id="CLU_2061463_0_0_1"/>
<dbReference type="InParanoid" id="Q8SUM8"/>
<dbReference type="OrthoDB" id="418495at2759"/>
<dbReference type="Proteomes" id="UP000000819">
    <property type="component" value="Chromosome VIII"/>
</dbReference>
<dbReference type="GO" id="GO:0005737">
    <property type="term" value="C:cytoplasm"/>
    <property type="evidence" value="ECO:0007669"/>
    <property type="project" value="UniProtKB-SubCell"/>
</dbReference>
<dbReference type="GO" id="GO:0016491">
    <property type="term" value="F:oxidoreductase activity"/>
    <property type="evidence" value="ECO:0007669"/>
    <property type="project" value="UniProtKB-ARBA"/>
</dbReference>
<dbReference type="Gene3D" id="3.40.30.10">
    <property type="entry name" value="Glutaredoxin"/>
    <property type="match status" value="1"/>
</dbReference>
<dbReference type="InterPro" id="IPR002109">
    <property type="entry name" value="Glutaredoxin"/>
</dbReference>
<dbReference type="InterPro" id="IPR036249">
    <property type="entry name" value="Thioredoxin-like_sf"/>
</dbReference>
<dbReference type="Pfam" id="PF00462">
    <property type="entry name" value="Glutaredoxin"/>
    <property type="match status" value="1"/>
</dbReference>
<dbReference type="SUPFAM" id="SSF52833">
    <property type="entry name" value="Thioredoxin-like"/>
    <property type="match status" value="1"/>
</dbReference>
<dbReference type="PROSITE" id="PS51354">
    <property type="entry name" value="GLUTAREDOXIN_2"/>
    <property type="match status" value="1"/>
</dbReference>
<accession>Q8SUM8</accession>
<sequence length="129" mass="14465">MKAVLLALALVYGSQGTEYGGGKMTEADYGEMVRREKCIMFVKRFCPYSIRARELLHDRGVGCKIIEVDNNLDAYSFAKRNHSTFPVFFLDGDLVEGGCEKLLVLSDSNLPPFDKSPLLTQNREPVLLD</sequence>